<gene>
    <name type="primary">TRMT10A</name>
    <name type="synonym">RG9MTD2</name>
</gene>
<feature type="chain" id="PRO_0000311314" description="tRNA methyltransferase 10 homolog A">
    <location>
        <begin position="1"/>
        <end position="338"/>
    </location>
</feature>
<feature type="domain" description="SAM-dependent MTase TRM10-type" evidence="4">
    <location>
        <begin position="88"/>
        <end position="279"/>
    </location>
</feature>
<feature type="region of interest" description="Disordered" evidence="5">
    <location>
        <begin position="1"/>
        <end position="91"/>
    </location>
</feature>
<feature type="region of interest" description="Disordered" evidence="5">
    <location>
        <begin position="296"/>
        <end position="338"/>
    </location>
</feature>
<feature type="coiled-coil region" evidence="3">
    <location>
        <begin position="52"/>
        <end position="80"/>
    </location>
</feature>
<feature type="compositionally biased region" description="Basic residues" evidence="5">
    <location>
        <begin position="61"/>
        <end position="73"/>
    </location>
</feature>
<feature type="compositionally biased region" description="Basic and acidic residues" evidence="5">
    <location>
        <begin position="308"/>
        <end position="328"/>
    </location>
</feature>
<feature type="compositionally biased region" description="Polar residues" evidence="5">
    <location>
        <begin position="329"/>
        <end position="338"/>
    </location>
</feature>
<feature type="modified residue" description="Phosphoserine" evidence="1">
    <location>
        <position position="22"/>
    </location>
</feature>
<feature type="modified residue" description="Phosphoserine" evidence="2">
    <location>
        <position position="335"/>
    </location>
</feature>
<evidence type="ECO:0000250" key="1">
    <source>
        <dbReference type="UniProtKB" id="Q4KLI2"/>
    </source>
</evidence>
<evidence type="ECO:0000250" key="2">
    <source>
        <dbReference type="UniProtKB" id="Q8TBZ6"/>
    </source>
</evidence>
<evidence type="ECO:0000255" key="3"/>
<evidence type="ECO:0000255" key="4">
    <source>
        <dbReference type="PROSITE-ProRule" id="PRU01012"/>
    </source>
</evidence>
<evidence type="ECO:0000256" key="5">
    <source>
        <dbReference type="SAM" id="MobiDB-lite"/>
    </source>
</evidence>
<name>TM10A_BOVIN</name>
<keyword id="KW-0175">Coiled coil</keyword>
<keyword id="KW-0489">Methyltransferase</keyword>
<keyword id="KW-0539">Nucleus</keyword>
<keyword id="KW-0597">Phosphoprotein</keyword>
<keyword id="KW-1185">Reference proteome</keyword>
<keyword id="KW-0949">S-adenosyl-L-methionine</keyword>
<keyword id="KW-0808">Transferase</keyword>
<proteinExistence type="evidence at transcript level"/>
<organism>
    <name type="scientific">Bos taurus</name>
    <name type="common">Bovine</name>
    <dbReference type="NCBI Taxonomy" id="9913"/>
    <lineage>
        <taxon>Eukaryota</taxon>
        <taxon>Metazoa</taxon>
        <taxon>Chordata</taxon>
        <taxon>Craniata</taxon>
        <taxon>Vertebrata</taxon>
        <taxon>Euteleostomi</taxon>
        <taxon>Mammalia</taxon>
        <taxon>Eutheria</taxon>
        <taxon>Laurasiatheria</taxon>
        <taxon>Artiodactyla</taxon>
        <taxon>Ruminantia</taxon>
        <taxon>Pecora</taxon>
        <taxon>Bovidae</taxon>
        <taxon>Bovinae</taxon>
        <taxon>Bos</taxon>
    </lineage>
</organism>
<reference key="1">
    <citation type="submission" date="2005-09" db="EMBL/GenBank/DDBJ databases">
        <authorList>
            <consortium name="NIH - Mammalian Gene Collection (MGC) project"/>
        </authorList>
    </citation>
    <scope>NUCLEOTIDE SEQUENCE [LARGE SCALE MRNA]</scope>
    <source>
        <strain>Hereford</strain>
        <tissue>Fetal liver</tissue>
    </source>
</reference>
<dbReference type="EC" id="2.1.1.221" evidence="2"/>
<dbReference type="EMBL" id="BC105223">
    <property type="protein sequence ID" value="AAI05224.1"/>
    <property type="molecule type" value="mRNA"/>
</dbReference>
<dbReference type="RefSeq" id="NP_001030554.1">
    <property type="nucleotide sequence ID" value="NM_001035477.2"/>
</dbReference>
<dbReference type="RefSeq" id="XP_005207767.1">
    <property type="nucleotide sequence ID" value="XM_005207710.5"/>
</dbReference>
<dbReference type="RefSeq" id="XP_005207768.1">
    <property type="nucleotide sequence ID" value="XM_005207711.5"/>
</dbReference>
<dbReference type="RefSeq" id="XP_010804261.1">
    <property type="nucleotide sequence ID" value="XM_010805959.2"/>
</dbReference>
<dbReference type="SMR" id="Q3MHI8"/>
<dbReference type="FunCoup" id="Q3MHI8">
    <property type="interactions" value="2462"/>
</dbReference>
<dbReference type="STRING" id="9913.ENSBTAP00000000230"/>
<dbReference type="PaxDb" id="9913-ENSBTAP00000000230"/>
<dbReference type="Ensembl" id="ENSBTAT00000000230.5">
    <property type="protein sequence ID" value="ENSBTAP00000000230.3"/>
    <property type="gene ID" value="ENSBTAG00000000197.5"/>
</dbReference>
<dbReference type="GeneID" id="616544"/>
<dbReference type="KEGG" id="bta:616544"/>
<dbReference type="CTD" id="93587"/>
<dbReference type="VEuPathDB" id="HostDB:ENSBTAG00000000197"/>
<dbReference type="VGNC" id="VGNC:36366">
    <property type="gene designation" value="TRMT10A"/>
</dbReference>
<dbReference type="eggNOG" id="KOG2967">
    <property type="taxonomic scope" value="Eukaryota"/>
</dbReference>
<dbReference type="GeneTree" id="ENSGT00530000063169"/>
<dbReference type="HOGENOM" id="CLU_034384_7_0_1"/>
<dbReference type="InParanoid" id="Q3MHI8"/>
<dbReference type="OMA" id="FKKNDGW"/>
<dbReference type="OrthoDB" id="278300at2759"/>
<dbReference type="TreeFam" id="TF330972"/>
<dbReference type="Proteomes" id="UP000009136">
    <property type="component" value="Chromosome 6"/>
</dbReference>
<dbReference type="Bgee" id="ENSBTAG00000000197">
    <property type="expression patterns" value="Expressed in semen and 105 other cell types or tissues"/>
</dbReference>
<dbReference type="GO" id="GO:0005829">
    <property type="term" value="C:cytosol"/>
    <property type="evidence" value="ECO:0000318"/>
    <property type="project" value="GO_Central"/>
</dbReference>
<dbReference type="GO" id="GO:0005730">
    <property type="term" value="C:nucleolus"/>
    <property type="evidence" value="ECO:0000250"/>
    <property type="project" value="UniProtKB"/>
</dbReference>
<dbReference type="GO" id="GO:0005654">
    <property type="term" value="C:nucleoplasm"/>
    <property type="evidence" value="ECO:0000318"/>
    <property type="project" value="GO_Central"/>
</dbReference>
<dbReference type="GO" id="GO:0005634">
    <property type="term" value="C:nucleus"/>
    <property type="evidence" value="ECO:0000250"/>
    <property type="project" value="UniProtKB"/>
</dbReference>
<dbReference type="GO" id="GO:0052905">
    <property type="term" value="F:tRNA (guanosine(9)-N1)-methyltransferase activity"/>
    <property type="evidence" value="ECO:0007669"/>
    <property type="project" value="UniProtKB-EC"/>
</dbReference>
<dbReference type="GO" id="GO:0000049">
    <property type="term" value="F:tRNA binding"/>
    <property type="evidence" value="ECO:0000250"/>
    <property type="project" value="UniProtKB"/>
</dbReference>
<dbReference type="GO" id="GO:0030488">
    <property type="term" value="P:tRNA methylation"/>
    <property type="evidence" value="ECO:0000250"/>
    <property type="project" value="UniProtKB"/>
</dbReference>
<dbReference type="GO" id="GO:0002939">
    <property type="term" value="P:tRNA N1-guanine methylation"/>
    <property type="evidence" value="ECO:0000318"/>
    <property type="project" value="GO_Central"/>
</dbReference>
<dbReference type="CDD" id="cd18101">
    <property type="entry name" value="Trm10euk_A"/>
    <property type="match status" value="1"/>
</dbReference>
<dbReference type="FunFam" id="3.40.1280.30:FF:000001">
    <property type="entry name" value="tRNA methyltransferase 10 homolog A"/>
    <property type="match status" value="1"/>
</dbReference>
<dbReference type="Gene3D" id="3.40.1280.30">
    <property type="match status" value="1"/>
</dbReference>
<dbReference type="InterPro" id="IPR028564">
    <property type="entry name" value="MT_TRM10-typ"/>
</dbReference>
<dbReference type="InterPro" id="IPR038459">
    <property type="entry name" value="MT_TRM10-typ_sf"/>
</dbReference>
<dbReference type="InterPro" id="IPR016653">
    <property type="entry name" value="TRM10/TRM10A"/>
</dbReference>
<dbReference type="InterPro" id="IPR007356">
    <property type="entry name" value="tRNA_m1G_MeTrfase_euk"/>
</dbReference>
<dbReference type="InterPro" id="IPR016009">
    <property type="entry name" value="tRNA_MeTrfase_TRMD/TRM10"/>
</dbReference>
<dbReference type="PANTHER" id="PTHR13563">
    <property type="entry name" value="TRNA (GUANINE-9-) METHYLTRANSFERASE"/>
    <property type="match status" value="1"/>
</dbReference>
<dbReference type="PANTHER" id="PTHR13563:SF13">
    <property type="entry name" value="TRNA METHYLTRANSFERASE 10 HOMOLOG A"/>
    <property type="match status" value="1"/>
</dbReference>
<dbReference type="Pfam" id="PF01746">
    <property type="entry name" value="tRNA_m1G_MT"/>
    <property type="match status" value="1"/>
</dbReference>
<dbReference type="PIRSF" id="PIRSF016323">
    <property type="entry name" value="tRNA_m1G_mtfrase_met"/>
    <property type="match status" value="1"/>
</dbReference>
<dbReference type="PROSITE" id="PS51675">
    <property type="entry name" value="SAM_MT_TRM10"/>
    <property type="match status" value="1"/>
</dbReference>
<comment type="function">
    <text evidence="2">S-adenosyl-L-methionine-dependent guanine N(1)-methyltransferase that catalyzes the formation of N(1)-methylguanine at position 9 (m1G9) in tRNAs. Probably not able to catalyze formation of N(1)-methyladenine at position 9 (m1A9) in tRNAs.</text>
</comment>
<comment type="catalytic activity">
    <reaction evidence="2">
        <text>guanosine(9) in tRNA + S-adenosyl-L-methionine = N(1)-methylguanosine(9) in tRNA + S-adenosyl-L-homocysteine + H(+)</text>
        <dbReference type="Rhea" id="RHEA:43156"/>
        <dbReference type="Rhea" id="RHEA-COMP:10367"/>
        <dbReference type="Rhea" id="RHEA-COMP:10368"/>
        <dbReference type="ChEBI" id="CHEBI:15378"/>
        <dbReference type="ChEBI" id="CHEBI:57856"/>
        <dbReference type="ChEBI" id="CHEBI:59789"/>
        <dbReference type="ChEBI" id="CHEBI:73542"/>
        <dbReference type="ChEBI" id="CHEBI:74269"/>
        <dbReference type="EC" id="2.1.1.221"/>
    </reaction>
</comment>
<comment type="subunit">
    <text evidence="2">Interacts with tRNA.</text>
</comment>
<comment type="subcellular location">
    <subcellularLocation>
        <location evidence="2">Nucleus</location>
    </subcellularLocation>
    <subcellularLocation>
        <location evidence="2">Nucleus</location>
        <location evidence="2">Nucleolus</location>
    </subcellularLocation>
</comment>
<comment type="similarity">
    <text evidence="4">Belongs to the class IV-like SAM-binding methyltransferase superfamily. TRM10 family.</text>
</comment>
<protein>
    <recommendedName>
        <fullName>tRNA methyltransferase 10 homolog A</fullName>
        <ecNumber evidence="2">2.1.1.221</ecNumber>
    </recommendedName>
    <alternativeName>
        <fullName>RNA (guanine-9-)-methyltransferase domain-containing protein 2</fullName>
    </alternativeName>
    <alternativeName>
        <fullName>tRNA (guanine(9)-N(1))-methyltransferase TRMT10A</fullName>
    </alternativeName>
</protein>
<sequence length="338" mass="39573">MSSEMLPAFSETCNVERQKNLSEDGEQNQKPGSSERFQPISKRQMKKLMKQKQWEEQRELRKQKRKEKRKRKQLERQCQPESNSDGSDRKRIRRDVVHSPLRLIIDCSFDSLMVLKDIKKLHKQIQRCYAENRRALHPVQFYLTSHGGQLKKNMDENDKGWVNWKDIHIKPEHYSEFIQKEDLIYLTSDSPNILKELDESKAYVIGGLVDHNHHKGLTYKQASDHGIDHAQLPLGNFVKMNSRKVLAVNHVFEIILEYLETRDWQEAFFTILPQRKGAVPTDQACESCSHDKKFARVEGGLNSDSSEEENRHELDSTHEEEKQDKENSTESTVNSVPH</sequence>
<accession>Q3MHI8</accession>